<gene>
    <name evidence="1" type="primary">folD</name>
    <name type="ordered locus">lp_1599</name>
</gene>
<feature type="chain" id="PRO_0000268377" description="Bifunctional protein FolD">
    <location>
        <begin position="1"/>
        <end position="286"/>
    </location>
</feature>
<feature type="binding site" evidence="1">
    <location>
        <begin position="166"/>
        <end position="168"/>
    </location>
    <ligand>
        <name>NADP(+)</name>
        <dbReference type="ChEBI" id="CHEBI:58349"/>
    </ligand>
</feature>
<feature type="binding site" evidence="1">
    <location>
        <position position="191"/>
    </location>
    <ligand>
        <name>NADP(+)</name>
        <dbReference type="ChEBI" id="CHEBI:58349"/>
    </ligand>
</feature>
<evidence type="ECO:0000255" key="1">
    <source>
        <dbReference type="HAMAP-Rule" id="MF_01576"/>
    </source>
</evidence>
<organism>
    <name type="scientific">Lactiplantibacillus plantarum (strain ATCC BAA-793 / NCIMB 8826 / WCFS1)</name>
    <name type="common">Lactobacillus plantarum</name>
    <dbReference type="NCBI Taxonomy" id="220668"/>
    <lineage>
        <taxon>Bacteria</taxon>
        <taxon>Bacillati</taxon>
        <taxon>Bacillota</taxon>
        <taxon>Bacilli</taxon>
        <taxon>Lactobacillales</taxon>
        <taxon>Lactobacillaceae</taxon>
        <taxon>Lactiplantibacillus</taxon>
    </lineage>
</organism>
<sequence>MTKIIDGKAVAKKVNAQTATAVAELAAQGIQPGIAVIIVGDDAASQIYVRNKNRKATKLGMHSVVRQLPATTSQDELLAIIAAYNADDSIHGILVQSPLPAQINEPLITMAIDPKKDVDGFHPTNVGKLITNFPGNYPVANTPRGIMTMLADYGVDPAGKTAVVIGRSTIVGKPMAALLTNANATVTIAHSKTADLKAVARTADILVVATGIAHLITGADIKPGATVIDVGMDRDENGKLVGDVDFDSAQGIAGLITPVPGGVGPMTIATLMQTTVELAKWSDVSE</sequence>
<reference key="1">
    <citation type="journal article" date="2003" name="Proc. Natl. Acad. Sci. U.S.A.">
        <title>Complete genome sequence of Lactobacillus plantarum WCFS1.</title>
        <authorList>
            <person name="Kleerebezem M."/>
            <person name="Boekhorst J."/>
            <person name="van Kranenburg R."/>
            <person name="Molenaar D."/>
            <person name="Kuipers O.P."/>
            <person name="Leer R."/>
            <person name="Tarchini R."/>
            <person name="Peters S.A."/>
            <person name="Sandbrink H.M."/>
            <person name="Fiers M.W.E.J."/>
            <person name="Stiekema W."/>
            <person name="Klein Lankhorst R.M."/>
            <person name="Bron P.A."/>
            <person name="Hoffer S.M."/>
            <person name="Nierop Groot M.N."/>
            <person name="Kerkhoven R."/>
            <person name="De Vries M."/>
            <person name="Ursing B."/>
            <person name="De Vos W.M."/>
            <person name="Siezen R.J."/>
        </authorList>
    </citation>
    <scope>NUCLEOTIDE SEQUENCE [LARGE SCALE GENOMIC DNA]</scope>
    <source>
        <strain>ATCC BAA-793 / NCIMB 8826 / WCFS1</strain>
    </source>
</reference>
<reference key="2">
    <citation type="journal article" date="2012" name="J. Bacteriol.">
        <title>Complete resequencing and reannotation of the Lactobacillus plantarum WCFS1 genome.</title>
        <authorList>
            <person name="Siezen R.J."/>
            <person name="Francke C."/>
            <person name="Renckens B."/>
            <person name="Boekhorst J."/>
            <person name="Wels M."/>
            <person name="Kleerebezem M."/>
            <person name="van Hijum S.A."/>
        </authorList>
    </citation>
    <scope>NUCLEOTIDE SEQUENCE [LARGE SCALE GENOMIC DNA]</scope>
    <scope>GENOME REANNOTATION</scope>
    <source>
        <strain>ATCC BAA-793 / NCIMB 8826 / WCFS1</strain>
    </source>
</reference>
<comment type="function">
    <text evidence="1">Catalyzes the oxidation of 5,10-methylenetetrahydrofolate to 5,10-methenyltetrahydrofolate and then the hydrolysis of 5,10-methenyltetrahydrofolate to 10-formyltetrahydrofolate.</text>
</comment>
<comment type="catalytic activity">
    <reaction evidence="1">
        <text>(6R)-5,10-methylene-5,6,7,8-tetrahydrofolate + NADP(+) = (6R)-5,10-methenyltetrahydrofolate + NADPH</text>
        <dbReference type="Rhea" id="RHEA:22812"/>
        <dbReference type="ChEBI" id="CHEBI:15636"/>
        <dbReference type="ChEBI" id="CHEBI:57455"/>
        <dbReference type="ChEBI" id="CHEBI:57783"/>
        <dbReference type="ChEBI" id="CHEBI:58349"/>
        <dbReference type="EC" id="1.5.1.5"/>
    </reaction>
</comment>
<comment type="catalytic activity">
    <reaction evidence="1">
        <text>(6R)-5,10-methenyltetrahydrofolate + H2O = (6R)-10-formyltetrahydrofolate + H(+)</text>
        <dbReference type="Rhea" id="RHEA:23700"/>
        <dbReference type="ChEBI" id="CHEBI:15377"/>
        <dbReference type="ChEBI" id="CHEBI:15378"/>
        <dbReference type="ChEBI" id="CHEBI:57455"/>
        <dbReference type="ChEBI" id="CHEBI:195366"/>
        <dbReference type="EC" id="3.5.4.9"/>
    </reaction>
</comment>
<comment type="pathway">
    <text evidence="1">One-carbon metabolism; tetrahydrofolate interconversion.</text>
</comment>
<comment type="subunit">
    <text evidence="1">Homodimer.</text>
</comment>
<comment type="similarity">
    <text evidence="1">Belongs to the tetrahydrofolate dehydrogenase/cyclohydrolase family.</text>
</comment>
<dbReference type="EC" id="1.5.1.5" evidence="1"/>
<dbReference type="EC" id="3.5.4.9" evidence="1"/>
<dbReference type="EMBL" id="AL935263">
    <property type="protein sequence ID" value="CCC78913.1"/>
    <property type="molecule type" value="Genomic_DNA"/>
</dbReference>
<dbReference type="RefSeq" id="WP_003645162.1">
    <property type="nucleotide sequence ID" value="NC_004567.2"/>
</dbReference>
<dbReference type="RefSeq" id="YP_004889427.1">
    <property type="nucleotide sequence ID" value="NC_004567.2"/>
</dbReference>
<dbReference type="SMR" id="Q88WM8"/>
<dbReference type="STRING" id="220668.lp_1599"/>
<dbReference type="EnsemblBacteria" id="CCC78913">
    <property type="protein sequence ID" value="CCC78913"/>
    <property type="gene ID" value="lp_1599"/>
</dbReference>
<dbReference type="KEGG" id="lpl:lp_1599"/>
<dbReference type="PATRIC" id="fig|220668.9.peg.1348"/>
<dbReference type="eggNOG" id="COG0190">
    <property type="taxonomic scope" value="Bacteria"/>
</dbReference>
<dbReference type="HOGENOM" id="CLU_034045_2_1_9"/>
<dbReference type="OrthoDB" id="9803580at2"/>
<dbReference type="PhylomeDB" id="Q88WM8"/>
<dbReference type="UniPathway" id="UPA00193"/>
<dbReference type="Proteomes" id="UP000000432">
    <property type="component" value="Chromosome"/>
</dbReference>
<dbReference type="GO" id="GO:0005829">
    <property type="term" value="C:cytosol"/>
    <property type="evidence" value="ECO:0007669"/>
    <property type="project" value="TreeGrafter"/>
</dbReference>
<dbReference type="GO" id="GO:0004477">
    <property type="term" value="F:methenyltetrahydrofolate cyclohydrolase activity"/>
    <property type="evidence" value="ECO:0007669"/>
    <property type="project" value="UniProtKB-UniRule"/>
</dbReference>
<dbReference type="GO" id="GO:0004488">
    <property type="term" value="F:methylenetetrahydrofolate dehydrogenase (NADP+) activity"/>
    <property type="evidence" value="ECO:0007669"/>
    <property type="project" value="UniProtKB-UniRule"/>
</dbReference>
<dbReference type="GO" id="GO:0000105">
    <property type="term" value="P:L-histidine biosynthetic process"/>
    <property type="evidence" value="ECO:0007669"/>
    <property type="project" value="UniProtKB-KW"/>
</dbReference>
<dbReference type="GO" id="GO:0009086">
    <property type="term" value="P:methionine biosynthetic process"/>
    <property type="evidence" value="ECO:0007669"/>
    <property type="project" value="UniProtKB-KW"/>
</dbReference>
<dbReference type="GO" id="GO:0006164">
    <property type="term" value="P:purine nucleotide biosynthetic process"/>
    <property type="evidence" value="ECO:0007669"/>
    <property type="project" value="UniProtKB-KW"/>
</dbReference>
<dbReference type="GO" id="GO:0035999">
    <property type="term" value="P:tetrahydrofolate interconversion"/>
    <property type="evidence" value="ECO:0007669"/>
    <property type="project" value="UniProtKB-UniRule"/>
</dbReference>
<dbReference type="CDD" id="cd01080">
    <property type="entry name" value="NAD_bind_m-THF_DH_Cyclohyd"/>
    <property type="match status" value="1"/>
</dbReference>
<dbReference type="FunFam" id="3.40.50.720:FF:000094">
    <property type="entry name" value="Bifunctional protein FolD"/>
    <property type="match status" value="1"/>
</dbReference>
<dbReference type="FunFam" id="3.40.50.10860:FF:000005">
    <property type="entry name" value="C-1-tetrahydrofolate synthase, cytoplasmic, putative"/>
    <property type="match status" value="1"/>
</dbReference>
<dbReference type="Gene3D" id="3.40.50.10860">
    <property type="entry name" value="Leucine Dehydrogenase, chain A, domain 1"/>
    <property type="match status" value="1"/>
</dbReference>
<dbReference type="Gene3D" id="3.40.50.720">
    <property type="entry name" value="NAD(P)-binding Rossmann-like Domain"/>
    <property type="match status" value="1"/>
</dbReference>
<dbReference type="HAMAP" id="MF_01576">
    <property type="entry name" value="THF_DHG_CYH"/>
    <property type="match status" value="1"/>
</dbReference>
<dbReference type="InterPro" id="IPR046346">
    <property type="entry name" value="Aminoacid_DH-like_N_sf"/>
</dbReference>
<dbReference type="InterPro" id="IPR036291">
    <property type="entry name" value="NAD(P)-bd_dom_sf"/>
</dbReference>
<dbReference type="InterPro" id="IPR000672">
    <property type="entry name" value="THF_DH/CycHdrlase"/>
</dbReference>
<dbReference type="InterPro" id="IPR020630">
    <property type="entry name" value="THF_DH/CycHdrlase_cat_dom"/>
</dbReference>
<dbReference type="InterPro" id="IPR020867">
    <property type="entry name" value="THF_DH/CycHdrlase_CS"/>
</dbReference>
<dbReference type="InterPro" id="IPR020631">
    <property type="entry name" value="THF_DH/CycHdrlase_NAD-bd_dom"/>
</dbReference>
<dbReference type="PANTHER" id="PTHR48099:SF5">
    <property type="entry name" value="C-1-TETRAHYDROFOLATE SYNTHASE, CYTOPLASMIC"/>
    <property type="match status" value="1"/>
</dbReference>
<dbReference type="PANTHER" id="PTHR48099">
    <property type="entry name" value="C-1-TETRAHYDROFOLATE SYNTHASE, CYTOPLASMIC-RELATED"/>
    <property type="match status" value="1"/>
</dbReference>
<dbReference type="Pfam" id="PF00763">
    <property type="entry name" value="THF_DHG_CYH"/>
    <property type="match status" value="1"/>
</dbReference>
<dbReference type="Pfam" id="PF02882">
    <property type="entry name" value="THF_DHG_CYH_C"/>
    <property type="match status" value="1"/>
</dbReference>
<dbReference type="PRINTS" id="PR00085">
    <property type="entry name" value="THFDHDRGNASE"/>
</dbReference>
<dbReference type="SUPFAM" id="SSF53223">
    <property type="entry name" value="Aminoacid dehydrogenase-like, N-terminal domain"/>
    <property type="match status" value="1"/>
</dbReference>
<dbReference type="SUPFAM" id="SSF51735">
    <property type="entry name" value="NAD(P)-binding Rossmann-fold domains"/>
    <property type="match status" value="1"/>
</dbReference>
<dbReference type="PROSITE" id="PS00767">
    <property type="entry name" value="THF_DHG_CYH_2"/>
    <property type="match status" value="1"/>
</dbReference>
<proteinExistence type="inferred from homology"/>
<name>FOLD_LACPL</name>
<protein>
    <recommendedName>
        <fullName evidence="1">Bifunctional protein FolD</fullName>
    </recommendedName>
    <domain>
        <recommendedName>
            <fullName evidence="1">Methylenetetrahydrofolate dehydrogenase</fullName>
            <ecNumber evidence="1">1.5.1.5</ecNumber>
        </recommendedName>
    </domain>
    <domain>
        <recommendedName>
            <fullName evidence="1">Methenyltetrahydrofolate cyclohydrolase</fullName>
            <ecNumber evidence="1">3.5.4.9</ecNumber>
        </recommendedName>
    </domain>
</protein>
<keyword id="KW-0028">Amino-acid biosynthesis</keyword>
<keyword id="KW-0368">Histidine biosynthesis</keyword>
<keyword id="KW-0378">Hydrolase</keyword>
<keyword id="KW-0486">Methionine biosynthesis</keyword>
<keyword id="KW-0511">Multifunctional enzyme</keyword>
<keyword id="KW-0521">NADP</keyword>
<keyword id="KW-0554">One-carbon metabolism</keyword>
<keyword id="KW-0560">Oxidoreductase</keyword>
<keyword id="KW-0658">Purine biosynthesis</keyword>
<keyword id="KW-1185">Reference proteome</keyword>
<accession>Q88WM8</accession>
<accession>F9UNX4</accession>